<keyword id="KW-0997">Cell inner membrane</keyword>
<keyword id="KW-1003">Cell membrane</keyword>
<keyword id="KW-0378">Hydrolase</keyword>
<keyword id="KW-0472">Membrane</keyword>
<keyword id="KW-0479">Metal-binding</keyword>
<keyword id="KW-0482">Metalloprotease</keyword>
<keyword id="KW-0645">Protease</keyword>
<keyword id="KW-1185">Reference proteome</keyword>
<keyword id="KW-0812">Transmembrane</keyword>
<keyword id="KW-1133">Transmembrane helix</keyword>
<keyword id="KW-0862">Zinc</keyword>
<proteinExistence type="inferred from homology"/>
<gene>
    <name type="ordered locus">Cj1068</name>
</gene>
<accession>Q9PNM6</accession>
<accession>Q0P9I6</accession>
<reference key="1">
    <citation type="journal article" date="2000" name="Nature">
        <title>The genome sequence of the food-borne pathogen Campylobacter jejuni reveals hypervariable sequences.</title>
        <authorList>
            <person name="Parkhill J."/>
            <person name="Wren B.W."/>
            <person name="Mungall K.L."/>
            <person name="Ketley J.M."/>
            <person name="Churcher C.M."/>
            <person name="Basham D."/>
            <person name="Chillingworth T."/>
            <person name="Davies R.M."/>
            <person name="Feltwell T."/>
            <person name="Holroyd S."/>
            <person name="Jagels K."/>
            <person name="Karlyshev A.V."/>
            <person name="Moule S."/>
            <person name="Pallen M.J."/>
            <person name="Penn C.W."/>
            <person name="Quail M.A."/>
            <person name="Rajandream M.A."/>
            <person name="Rutherford K.M."/>
            <person name="van Vliet A.H.M."/>
            <person name="Whitehead S."/>
            <person name="Barrell B.G."/>
        </authorList>
    </citation>
    <scope>NUCLEOTIDE SEQUENCE [LARGE SCALE GENOMIC DNA]</scope>
    <source>
        <strain>ATCC 700819 / NCTC 11168</strain>
    </source>
</reference>
<evidence type="ECO:0000250" key="1"/>
<evidence type="ECO:0000255" key="2"/>
<evidence type="ECO:0000255" key="3">
    <source>
        <dbReference type="PROSITE-ProRule" id="PRU10095"/>
    </source>
</evidence>
<evidence type="ECO:0000305" key="4"/>
<sequence length="368" mass="40960">MRSLLLLIVILILGIKFYSIEFLATVLVISFLIFFHELGHFLAARSLGVKVEVFSIGFGKSLIEREFKGTNYRLSTLPLGGYVKLKGQDDMRPGFENLDKDSYSILSPLKKIYILFAGPFFNLILAFFLYIIIGNLGLNKLAPQIGNIAPNSAAQEIGLQKNDTILEINGIRIQTFDEISKHLSLDPLKILINREGKNLEFILTPKIGQGYNDFGQIVEKPQLGVSPNGTSTLVKHQGLESFKYAAQESFQASTLIIKGIVKLISGEVEAKNLGGIITMTEITSKAAQNSFTLLLFITALISINLGILNLLPIPMLDGGHILFNLYEMIFRRKVPQRTFEYLSYTGMAILLSLMLFATYNDISRIIGE</sequence>
<dbReference type="EC" id="3.4.24.-"/>
<dbReference type="EMBL" id="AL111168">
    <property type="protein sequence ID" value="CAL35185.1"/>
    <property type="molecule type" value="Genomic_DNA"/>
</dbReference>
<dbReference type="PIR" id="G81309">
    <property type="entry name" value="G81309"/>
</dbReference>
<dbReference type="RefSeq" id="YP_002344461.1">
    <property type="nucleotide sequence ID" value="NC_002163.1"/>
</dbReference>
<dbReference type="SMR" id="Q9PNM6"/>
<dbReference type="STRING" id="192222.Cj1068"/>
<dbReference type="PaxDb" id="192222-Cj1068"/>
<dbReference type="EnsemblBacteria" id="CAL35185">
    <property type="protein sequence ID" value="CAL35185"/>
    <property type="gene ID" value="Cj1068"/>
</dbReference>
<dbReference type="GeneID" id="905359"/>
<dbReference type="KEGG" id="cje:Cj1068"/>
<dbReference type="PATRIC" id="fig|192222.6.peg.1050"/>
<dbReference type="eggNOG" id="COG0750">
    <property type="taxonomic scope" value="Bacteria"/>
</dbReference>
<dbReference type="HOGENOM" id="CLU_025778_1_0_7"/>
<dbReference type="OrthoDB" id="9782003at2"/>
<dbReference type="Proteomes" id="UP000000799">
    <property type="component" value="Chromosome"/>
</dbReference>
<dbReference type="GO" id="GO:0005886">
    <property type="term" value="C:plasma membrane"/>
    <property type="evidence" value="ECO:0007669"/>
    <property type="project" value="UniProtKB-SubCell"/>
</dbReference>
<dbReference type="GO" id="GO:0046872">
    <property type="term" value="F:metal ion binding"/>
    <property type="evidence" value="ECO:0007669"/>
    <property type="project" value="UniProtKB-KW"/>
</dbReference>
<dbReference type="GO" id="GO:0004222">
    <property type="term" value="F:metalloendopeptidase activity"/>
    <property type="evidence" value="ECO:0007669"/>
    <property type="project" value="InterPro"/>
</dbReference>
<dbReference type="GO" id="GO:0006508">
    <property type="term" value="P:proteolysis"/>
    <property type="evidence" value="ECO:0007669"/>
    <property type="project" value="UniProtKB-KW"/>
</dbReference>
<dbReference type="CDD" id="cd23081">
    <property type="entry name" value="cpPDZ_EcRseP-like"/>
    <property type="match status" value="1"/>
</dbReference>
<dbReference type="CDD" id="cd06163">
    <property type="entry name" value="S2P-M50_PDZ_RseP-like"/>
    <property type="match status" value="1"/>
</dbReference>
<dbReference type="Gene3D" id="2.30.42.10">
    <property type="match status" value="1"/>
</dbReference>
<dbReference type="InterPro" id="IPR001478">
    <property type="entry name" value="PDZ"/>
</dbReference>
<dbReference type="InterPro" id="IPR041489">
    <property type="entry name" value="PDZ_6"/>
</dbReference>
<dbReference type="InterPro" id="IPR036034">
    <property type="entry name" value="PDZ_sf"/>
</dbReference>
<dbReference type="InterPro" id="IPR004387">
    <property type="entry name" value="Pept_M50_Zn"/>
</dbReference>
<dbReference type="InterPro" id="IPR008915">
    <property type="entry name" value="Peptidase_M50"/>
</dbReference>
<dbReference type="NCBIfam" id="TIGR00054">
    <property type="entry name" value="RIP metalloprotease RseP"/>
    <property type="match status" value="1"/>
</dbReference>
<dbReference type="PANTHER" id="PTHR42837:SF2">
    <property type="entry name" value="MEMBRANE METALLOPROTEASE ARASP2, CHLOROPLASTIC-RELATED"/>
    <property type="match status" value="1"/>
</dbReference>
<dbReference type="PANTHER" id="PTHR42837">
    <property type="entry name" value="REGULATOR OF SIGMA-E PROTEASE RSEP"/>
    <property type="match status" value="1"/>
</dbReference>
<dbReference type="Pfam" id="PF17820">
    <property type="entry name" value="PDZ_6"/>
    <property type="match status" value="1"/>
</dbReference>
<dbReference type="Pfam" id="PF02163">
    <property type="entry name" value="Peptidase_M50"/>
    <property type="match status" value="1"/>
</dbReference>
<dbReference type="SMART" id="SM00228">
    <property type="entry name" value="PDZ"/>
    <property type="match status" value="1"/>
</dbReference>
<dbReference type="SUPFAM" id="SSF50156">
    <property type="entry name" value="PDZ domain-like"/>
    <property type="match status" value="1"/>
</dbReference>
<dbReference type="PROSITE" id="PS00142">
    <property type="entry name" value="ZINC_PROTEASE"/>
    <property type="match status" value="1"/>
</dbReference>
<protein>
    <recommendedName>
        <fullName>Putative zinc metalloprotease Cj1068</fullName>
        <ecNumber>3.4.24.-</ecNumber>
    </recommendedName>
</protein>
<organism>
    <name type="scientific">Campylobacter jejuni subsp. jejuni serotype O:2 (strain ATCC 700819 / NCTC 11168)</name>
    <dbReference type="NCBI Taxonomy" id="192222"/>
    <lineage>
        <taxon>Bacteria</taxon>
        <taxon>Pseudomonadati</taxon>
        <taxon>Campylobacterota</taxon>
        <taxon>Epsilonproteobacteria</taxon>
        <taxon>Campylobacterales</taxon>
        <taxon>Campylobacteraceae</taxon>
        <taxon>Campylobacter</taxon>
    </lineage>
</organism>
<feature type="chain" id="PRO_0000088434" description="Putative zinc metalloprotease Cj1068">
    <location>
        <begin position="1"/>
        <end position="368"/>
    </location>
</feature>
<feature type="transmembrane region" description="Helical" evidence="2">
    <location>
        <begin position="112"/>
        <end position="134"/>
    </location>
</feature>
<feature type="transmembrane region" description="Helical" evidence="2">
    <location>
        <begin position="291"/>
        <end position="313"/>
    </location>
</feature>
<feature type="transmembrane region" description="Helical" evidence="2">
    <location>
        <begin position="338"/>
        <end position="360"/>
    </location>
</feature>
<feature type="domain" description="PDZ">
    <location>
        <begin position="126"/>
        <end position="197"/>
    </location>
</feature>
<feature type="active site" evidence="3">
    <location>
        <position position="37"/>
    </location>
</feature>
<feature type="binding site" evidence="3">
    <location>
        <position position="36"/>
    </location>
    <ligand>
        <name>Zn(2+)</name>
        <dbReference type="ChEBI" id="CHEBI:29105"/>
        <note>catalytic</note>
    </ligand>
</feature>
<feature type="binding site" evidence="3">
    <location>
        <position position="40"/>
    </location>
    <ligand>
        <name>Zn(2+)</name>
        <dbReference type="ChEBI" id="CHEBI:29105"/>
        <note>catalytic</note>
    </ligand>
</feature>
<comment type="cofactor">
    <cofactor evidence="4">
        <name>Zn(2+)</name>
        <dbReference type="ChEBI" id="CHEBI:29105"/>
    </cofactor>
</comment>
<comment type="subcellular location">
    <subcellularLocation>
        <location evidence="1">Cell inner membrane</location>
        <topology evidence="1">Multi-pass membrane protein</topology>
    </subcellularLocation>
</comment>
<comment type="similarity">
    <text evidence="4">Belongs to the peptidase M50B family.</text>
</comment>
<name>Y1068_CAMJE</name>